<accession>Q9DBR2</accession>
<accession>D3YTZ3</accession>
<sequence>MFSCFCFSLQDNSFGSAAVTECDEDTVSVHEDEDDCSGLRDEDNKENYPQVAARLDELALPSHEAQQHVEQTLPVDGVLRTSMGNFKSRKPKSILRAESGRNHGESQETEHVVPSQSECQGRAGTPAHESPQSSIFRCQETVRLQPRIDQRATIWPKDAFGTQQDLHENSLLKLQALESGLCSAFLTTQEEDGQVHGVKDPAPASTQSAPADSADPADPMPAHKDAPGDADGTSEDLQSAGTSRLLYHITDGDNPLLSPRCSIFSQSQRFNLDPESAPSPPSSQQFMMPRSSSRCGSGDGKEPQTITQLTKHIQSLKRKIRKFEEKFEQEKKYRPSHGDKTSNPEVLKWMNDLAKGRKQLKELKLKLSEEQGSTPKGPRRNLSCEQPPVPRENGKSEAVGPEPGSSGEETSDAVVPEKREQTPPQDDGKGTKQDKNLIKPLYDRCRGIKQILPTPSLIPTIQEEEDSDEDCPQGSQQPSLPDPVSRLPVGDHLIYSETEPVRTLLPDEKKEGKQPALSMSNLHEATMPVLLDHLRETRADKKRLRKALREFEEQFFKQTGRSPQKEDRMPMADEYCEYKHIKAKLRLLEVLISKQDVAKTI</sequence>
<reference key="1">
    <citation type="journal article" date="2005" name="Science">
        <title>The transcriptional landscape of the mammalian genome.</title>
        <authorList>
            <person name="Carninci P."/>
            <person name="Kasukawa T."/>
            <person name="Katayama S."/>
            <person name="Gough J."/>
            <person name="Frith M.C."/>
            <person name="Maeda N."/>
            <person name="Oyama R."/>
            <person name="Ravasi T."/>
            <person name="Lenhard B."/>
            <person name="Wells C."/>
            <person name="Kodzius R."/>
            <person name="Shimokawa K."/>
            <person name="Bajic V.B."/>
            <person name="Brenner S.E."/>
            <person name="Batalov S."/>
            <person name="Forrest A.R."/>
            <person name="Zavolan M."/>
            <person name="Davis M.J."/>
            <person name="Wilming L.G."/>
            <person name="Aidinis V."/>
            <person name="Allen J.E."/>
            <person name="Ambesi-Impiombato A."/>
            <person name="Apweiler R."/>
            <person name="Aturaliya R.N."/>
            <person name="Bailey T.L."/>
            <person name="Bansal M."/>
            <person name="Baxter L."/>
            <person name="Beisel K.W."/>
            <person name="Bersano T."/>
            <person name="Bono H."/>
            <person name="Chalk A.M."/>
            <person name="Chiu K.P."/>
            <person name="Choudhary V."/>
            <person name="Christoffels A."/>
            <person name="Clutterbuck D.R."/>
            <person name="Crowe M.L."/>
            <person name="Dalla E."/>
            <person name="Dalrymple B.P."/>
            <person name="de Bono B."/>
            <person name="Della Gatta G."/>
            <person name="di Bernardo D."/>
            <person name="Down T."/>
            <person name="Engstrom P."/>
            <person name="Fagiolini M."/>
            <person name="Faulkner G."/>
            <person name="Fletcher C.F."/>
            <person name="Fukushima T."/>
            <person name="Furuno M."/>
            <person name="Futaki S."/>
            <person name="Gariboldi M."/>
            <person name="Georgii-Hemming P."/>
            <person name="Gingeras T.R."/>
            <person name="Gojobori T."/>
            <person name="Green R.E."/>
            <person name="Gustincich S."/>
            <person name="Harbers M."/>
            <person name="Hayashi Y."/>
            <person name="Hensch T.K."/>
            <person name="Hirokawa N."/>
            <person name="Hill D."/>
            <person name="Huminiecki L."/>
            <person name="Iacono M."/>
            <person name="Ikeo K."/>
            <person name="Iwama A."/>
            <person name="Ishikawa T."/>
            <person name="Jakt M."/>
            <person name="Kanapin A."/>
            <person name="Katoh M."/>
            <person name="Kawasawa Y."/>
            <person name="Kelso J."/>
            <person name="Kitamura H."/>
            <person name="Kitano H."/>
            <person name="Kollias G."/>
            <person name="Krishnan S.P."/>
            <person name="Kruger A."/>
            <person name="Kummerfeld S.K."/>
            <person name="Kurochkin I.V."/>
            <person name="Lareau L.F."/>
            <person name="Lazarevic D."/>
            <person name="Lipovich L."/>
            <person name="Liu J."/>
            <person name="Liuni S."/>
            <person name="McWilliam S."/>
            <person name="Madan Babu M."/>
            <person name="Madera M."/>
            <person name="Marchionni L."/>
            <person name="Matsuda H."/>
            <person name="Matsuzawa S."/>
            <person name="Miki H."/>
            <person name="Mignone F."/>
            <person name="Miyake S."/>
            <person name="Morris K."/>
            <person name="Mottagui-Tabar S."/>
            <person name="Mulder N."/>
            <person name="Nakano N."/>
            <person name="Nakauchi H."/>
            <person name="Ng P."/>
            <person name="Nilsson R."/>
            <person name="Nishiguchi S."/>
            <person name="Nishikawa S."/>
            <person name="Nori F."/>
            <person name="Ohara O."/>
            <person name="Okazaki Y."/>
            <person name="Orlando V."/>
            <person name="Pang K.C."/>
            <person name="Pavan W.J."/>
            <person name="Pavesi G."/>
            <person name="Pesole G."/>
            <person name="Petrovsky N."/>
            <person name="Piazza S."/>
            <person name="Reed J."/>
            <person name="Reid J.F."/>
            <person name="Ring B.Z."/>
            <person name="Ringwald M."/>
            <person name="Rost B."/>
            <person name="Ruan Y."/>
            <person name="Salzberg S.L."/>
            <person name="Sandelin A."/>
            <person name="Schneider C."/>
            <person name="Schoenbach C."/>
            <person name="Sekiguchi K."/>
            <person name="Semple C.A."/>
            <person name="Seno S."/>
            <person name="Sessa L."/>
            <person name="Sheng Y."/>
            <person name="Shibata Y."/>
            <person name="Shimada H."/>
            <person name="Shimada K."/>
            <person name="Silva D."/>
            <person name="Sinclair B."/>
            <person name="Sperling S."/>
            <person name="Stupka E."/>
            <person name="Sugiura K."/>
            <person name="Sultana R."/>
            <person name="Takenaka Y."/>
            <person name="Taki K."/>
            <person name="Tammoja K."/>
            <person name="Tan S.L."/>
            <person name="Tang S."/>
            <person name="Taylor M.S."/>
            <person name="Tegner J."/>
            <person name="Teichmann S.A."/>
            <person name="Ueda H.R."/>
            <person name="van Nimwegen E."/>
            <person name="Verardo R."/>
            <person name="Wei C.L."/>
            <person name="Yagi K."/>
            <person name="Yamanishi H."/>
            <person name="Zabarovsky E."/>
            <person name="Zhu S."/>
            <person name="Zimmer A."/>
            <person name="Hide W."/>
            <person name="Bult C."/>
            <person name="Grimmond S.M."/>
            <person name="Teasdale R.D."/>
            <person name="Liu E.T."/>
            <person name="Brusic V."/>
            <person name="Quackenbush J."/>
            <person name="Wahlestedt C."/>
            <person name="Mattick J.S."/>
            <person name="Hume D.A."/>
            <person name="Kai C."/>
            <person name="Sasaki D."/>
            <person name="Tomaru Y."/>
            <person name="Fukuda S."/>
            <person name="Kanamori-Katayama M."/>
            <person name="Suzuki M."/>
            <person name="Aoki J."/>
            <person name="Arakawa T."/>
            <person name="Iida J."/>
            <person name="Imamura K."/>
            <person name="Itoh M."/>
            <person name="Kato T."/>
            <person name="Kawaji H."/>
            <person name="Kawagashira N."/>
            <person name="Kawashima T."/>
            <person name="Kojima M."/>
            <person name="Kondo S."/>
            <person name="Konno H."/>
            <person name="Nakano K."/>
            <person name="Ninomiya N."/>
            <person name="Nishio T."/>
            <person name="Okada M."/>
            <person name="Plessy C."/>
            <person name="Shibata K."/>
            <person name="Shiraki T."/>
            <person name="Suzuki S."/>
            <person name="Tagami M."/>
            <person name="Waki K."/>
            <person name="Watahiki A."/>
            <person name="Okamura-Oho Y."/>
            <person name="Suzuki H."/>
            <person name="Kawai J."/>
            <person name="Hayashizaki Y."/>
        </authorList>
    </citation>
    <scope>NUCLEOTIDE SEQUENCE [LARGE SCALE MRNA]</scope>
    <source>
        <strain>C57BL/6J</strain>
        <tissue>Lung</tissue>
    </source>
</reference>
<reference key="2">
    <citation type="journal article" date="2009" name="PLoS Biol.">
        <title>Lineage-specific biology revealed by a finished genome assembly of the mouse.</title>
        <authorList>
            <person name="Church D.M."/>
            <person name="Goodstadt L."/>
            <person name="Hillier L.W."/>
            <person name="Zody M.C."/>
            <person name="Goldstein S."/>
            <person name="She X."/>
            <person name="Bult C.J."/>
            <person name="Agarwala R."/>
            <person name="Cherry J.L."/>
            <person name="DiCuccio M."/>
            <person name="Hlavina W."/>
            <person name="Kapustin Y."/>
            <person name="Meric P."/>
            <person name="Maglott D."/>
            <person name="Birtle Z."/>
            <person name="Marques A.C."/>
            <person name="Graves T."/>
            <person name="Zhou S."/>
            <person name="Teague B."/>
            <person name="Potamousis K."/>
            <person name="Churas C."/>
            <person name="Place M."/>
            <person name="Herschleb J."/>
            <person name="Runnheim R."/>
            <person name="Forrest D."/>
            <person name="Amos-Landgraf J."/>
            <person name="Schwartz D.C."/>
            <person name="Cheng Z."/>
            <person name="Lindblad-Toh K."/>
            <person name="Eichler E.E."/>
            <person name="Ponting C.P."/>
        </authorList>
    </citation>
    <scope>NUCLEOTIDE SEQUENCE [LARGE SCALE GENOMIC DNA]</scope>
    <source>
        <strain>C57BL/6J</strain>
    </source>
</reference>
<reference key="3">
    <citation type="submission" date="2005-07" db="EMBL/GenBank/DDBJ databases">
        <authorList>
            <person name="Mural R.J."/>
            <person name="Adams M.D."/>
            <person name="Myers E.W."/>
            <person name="Smith H.O."/>
            <person name="Venter J.C."/>
        </authorList>
    </citation>
    <scope>NUCLEOTIDE SEQUENCE [LARGE SCALE GENOMIC DNA]</scope>
</reference>
<reference key="4">
    <citation type="journal article" date="2009" name="Immunity">
        <title>The phagosomal proteome in interferon-gamma-activated macrophages.</title>
        <authorList>
            <person name="Trost M."/>
            <person name="English L."/>
            <person name="Lemieux S."/>
            <person name="Courcelles M."/>
            <person name="Desjardins M."/>
            <person name="Thibault P."/>
        </authorList>
    </citation>
    <scope>PHOSPHORYLATION [LARGE SCALE ANALYSIS] AT SER-130 AND SER-258</scope>
    <scope>IDENTIFICATION BY MASS SPECTROMETRY [LARGE SCALE ANALYSIS]</scope>
</reference>
<reference key="5">
    <citation type="journal article" date="2010" name="Cell">
        <title>A tissue-specific atlas of mouse protein phosphorylation and expression.</title>
        <authorList>
            <person name="Huttlin E.L."/>
            <person name="Jedrychowski M.P."/>
            <person name="Elias J.E."/>
            <person name="Goswami T."/>
            <person name="Rad R."/>
            <person name="Beausoleil S.A."/>
            <person name="Villen J."/>
            <person name="Haas W."/>
            <person name="Sowa M.E."/>
            <person name="Gygi S.P."/>
        </authorList>
    </citation>
    <scope>PHOSPHORYLATION [LARGE SCALE ANALYSIS] AT SER-405 AND SER-406</scope>
    <scope>IDENTIFICATION BY MASS SPECTROMETRY [LARGE SCALE ANALYSIS]</scope>
    <source>
        <tissue>Brain</tissue>
        <tissue>Spleen</tissue>
    </source>
</reference>
<organism>
    <name type="scientific">Mus musculus</name>
    <name type="common">Mouse</name>
    <dbReference type="NCBI Taxonomy" id="10090"/>
    <lineage>
        <taxon>Eukaryota</taxon>
        <taxon>Metazoa</taxon>
        <taxon>Chordata</taxon>
        <taxon>Craniata</taxon>
        <taxon>Vertebrata</taxon>
        <taxon>Euteleostomi</taxon>
        <taxon>Mammalia</taxon>
        <taxon>Eutheria</taxon>
        <taxon>Euarchontoglires</taxon>
        <taxon>Glires</taxon>
        <taxon>Rodentia</taxon>
        <taxon>Myomorpha</taxon>
        <taxon>Muroidea</taxon>
        <taxon>Muridae</taxon>
        <taxon>Murinae</taxon>
        <taxon>Mus</taxon>
        <taxon>Mus</taxon>
    </lineage>
</organism>
<proteinExistence type="evidence at protein level"/>
<name>FA13C_MOUSE</name>
<gene>
    <name type="primary">Fam13c</name>
    <name type="synonym">Fam13c1</name>
</gene>
<comment type="similarity">
    <text evidence="2">Belongs to the FAM13 family.</text>
</comment>
<feature type="chain" id="PRO_0000058923" description="Protein FAM13C">
    <location>
        <begin position="1"/>
        <end position="601"/>
    </location>
</feature>
<feature type="region of interest" description="Disordered" evidence="1">
    <location>
        <begin position="82"/>
        <end position="134"/>
    </location>
</feature>
<feature type="region of interest" description="Disordered" evidence="1">
    <location>
        <begin position="192"/>
        <end position="238"/>
    </location>
</feature>
<feature type="region of interest" description="Disordered" evidence="1">
    <location>
        <begin position="268"/>
        <end position="304"/>
    </location>
</feature>
<feature type="region of interest" description="Disordered" evidence="1">
    <location>
        <begin position="327"/>
        <end position="352"/>
    </location>
</feature>
<feature type="region of interest" description="Disordered" evidence="1">
    <location>
        <begin position="366"/>
        <end position="485"/>
    </location>
</feature>
<feature type="compositionally biased region" description="Basic and acidic residues" evidence="1">
    <location>
        <begin position="98"/>
        <end position="111"/>
    </location>
</feature>
<feature type="compositionally biased region" description="Low complexity" evidence="1">
    <location>
        <begin position="200"/>
        <end position="217"/>
    </location>
</feature>
<feature type="compositionally biased region" description="Low complexity" evidence="1">
    <location>
        <begin position="282"/>
        <end position="294"/>
    </location>
</feature>
<feature type="compositionally biased region" description="Basic and acidic residues" evidence="1">
    <location>
        <begin position="327"/>
        <end position="342"/>
    </location>
</feature>
<feature type="compositionally biased region" description="Basic and acidic residues" evidence="1">
    <location>
        <begin position="415"/>
        <end position="446"/>
    </location>
</feature>
<feature type="compositionally biased region" description="Acidic residues" evidence="1">
    <location>
        <begin position="462"/>
        <end position="471"/>
    </location>
</feature>
<feature type="modified residue" description="Phosphoserine" evidence="3">
    <location>
        <position position="130"/>
    </location>
</feature>
<feature type="modified residue" description="Phosphoserine" evidence="3">
    <location>
        <position position="258"/>
    </location>
</feature>
<feature type="modified residue" description="Phosphoserine" evidence="4">
    <location>
        <position position="405"/>
    </location>
</feature>
<feature type="modified residue" description="Phosphoserine" evidence="4">
    <location>
        <position position="406"/>
    </location>
</feature>
<feature type="sequence conflict" description="In Ref. 1; BAB23571." evidence="2" ref="1">
    <original>K</original>
    <variation>Q</variation>
    <location>
        <position position="599"/>
    </location>
</feature>
<evidence type="ECO:0000256" key="1">
    <source>
        <dbReference type="SAM" id="MobiDB-lite"/>
    </source>
</evidence>
<evidence type="ECO:0000305" key="2"/>
<evidence type="ECO:0007744" key="3">
    <source>
    </source>
</evidence>
<evidence type="ECO:0007744" key="4">
    <source>
    </source>
</evidence>
<protein>
    <recommendedName>
        <fullName>Protein FAM13C</fullName>
    </recommendedName>
</protein>
<keyword id="KW-0597">Phosphoprotein</keyword>
<keyword id="KW-1185">Reference proteome</keyword>
<dbReference type="EMBL" id="AK004797">
    <property type="protein sequence ID" value="BAB23571.1"/>
    <property type="molecule type" value="mRNA"/>
</dbReference>
<dbReference type="EMBL" id="AC079681">
    <property type="status" value="NOT_ANNOTATED_CDS"/>
    <property type="molecule type" value="Genomic_DNA"/>
</dbReference>
<dbReference type="EMBL" id="AC122896">
    <property type="status" value="NOT_ANNOTATED_CDS"/>
    <property type="molecule type" value="Genomic_DNA"/>
</dbReference>
<dbReference type="EMBL" id="CH466553">
    <property type="protein sequence ID" value="EDL31976.1"/>
    <property type="molecule type" value="Genomic_DNA"/>
</dbReference>
<dbReference type="CCDS" id="CCDS35932.1"/>
<dbReference type="RefSeq" id="NP_077206.3">
    <property type="nucleotide sequence ID" value="NM_024244.4"/>
</dbReference>
<dbReference type="SMR" id="Q9DBR2"/>
<dbReference type="FunCoup" id="Q9DBR2">
    <property type="interactions" value="120"/>
</dbReference>
<dbReference type="STRING" id="10090.ENSMUSP00000051375"/>
<dbReference type="GlyGen" id="Q9DBR2">
    <property type="glycosylation" value="1 site"/>
</dbReference>
<dbReference type="iPTMnet" id="Q9DBR2"/>
<dbReference type="PhosphoSitePlus" id="Q9DBR2"/>
<dbReference type="PaxDb" id="10090-ENSMUSP00000051375"/>
<dbReference type="ProteomicsDB" id="275579"/>
<dbReference type="Antibodypedia" id="28120">
    <property type="antibodies" value="74 antibodies from 16 providers"/>
</dbReference>
<dbReference type="DNASU" id="71721"/>
<dbReference type="Ensembl" id="ENSMUST00000062883.7">
    <property type="protein sequence ID" value="ENSMUSP00000051375.7"/>
    <property type="gene ID" value="ENSMUSG00000043259.16"/>
</dbReference>
<dbReference type="GeneID" id="71721"/>
<dbReference type="KEGG" id="mmu:71721"/>
<dbReference type="UCSC" id="uc007fnx.2">
    <property type="organism name" value="mouse"/>
</dbReference>
<dbReference type="AGR" id="MGI:1918971"/>
<dbReference type="CTD" id="220965"/>
<dbReference type="MGI" id="MGI:1918971">
    <property type="gene designation" value="Fam13c"/>
</dbReference>
<dbReference type="VEuPathDB" id="HostDB:ENSMUSG00000043259"/>
<dbReference type="eggNOG" id="ENOG502QWSB">
    <property type="taxonomic scope" value="Eukaryota"/>
</dbReference>
<dbReference type="GeneTree" id="ENSGT00950000183033"/>
<dbReference type="InParanoid" id="Q9DBR2"/>
<dbReference type="OMA" id="WLMFSCF"/>
<dbReference type="OrthoDB" id="185175at2759"/>
<dbReference type="PhylomeDB" id="Q9DBR2"/>
<dbReference type="TreeFam" id="TF328895"/>
<dbReference type="BioGRID-ORCS" id="71721">
    <property type="hits" value="2 hits in 77 CRISPR screens"/>
</dbReference>
<dbReference type="ChiTaRS" id="Fam13c">
    <property type="organism name" value="mouse"/>
</dbReference>
<dbReference type="PRO" id="PR:Q9DBR2"/>
<dbReference type="Proteomes" id="UP000000589">
    <property type="component" value="Chromosome 10"/>
</dbReference>
<dbReference type="RNAct" id="Q9DBR2">
    <property type="molecule type" value="protein"/>
</dbReference>
<dbReference type="Bgee" id="ENSMUSG00000043259">
    <property type="expression patterns" value="Expressed in lateral septal nucleus and 245 other cell types or tissues"/>
</dbReference>
<dbReference type="ExpressionAtlas" id="Q9DBR2">
    <property type="expression patterns" value="baseline and differential"/>
</dbReference>
<dbReference type="InterPro" id="IPR039102">
    <property type="entry name" value="FAM13"/>
</dbReference>
<dbReference type="PANTHER" id="PTHR15904">
    <property type="entry name" value="FAM13"/>
    <property type="match status" value="1"/>
</dbReference>
<dbReference type="PANTHER" id="PTHR15904:SF19">
    <property type="entry name" value="PROTEIN FAM13C"/>
    <property type="match status" value="1"/>
</dbReference>